<feature type="chain" id="PRO_0000215042" description="Pre-mRNA polyadenylation factor FIP1">
    <location>
        <begin position="1"/>
        <end position="327"/>
    </location>
</feature>
<feature type="region of interest" description="Disordered" evidence="1">
    <location>
        <begin position="1"/>
        <end position="82"/>
    </location>
</feature>
<feature type="region of interest" description="Disordered" evidence="1">
    <location>
        <begin position="272"/>
        <end position="327"/>
    </location>
</feature>
<feature type="compositionally biased region" description="Acidic residues" evidence="1">
    <location>
        <begin position="64"/>
        <end position="81"/>
    </location>
</feature>
<feature type="compositionally biased region" description="Pro residues" evidence="1">
    <location>
        <begin position="282"/>
        <end position="311"/>
    </location>
</feature>
<feature type="compositionally biased region" description="Low complexity" evidence="1">
    <location>
        <begin position="312"/>
        <end position="327"/>
    </location>
</feature>
<feature type="modified residue" description="Phosphoserine" evidence="10 11">
    <location>
        <position position="50"/>
    </location>
</feature>
<feature type="strand" evidence="12">
    <location>
        <begin position="83"/>
        <end position="85"/>
    </location>
</feature>
<feature type="strand" evidence="12">
    <location>
        <begin position="87"/>
        <end position="90"/>
    </location>
</feature>
<feature type="strand" evidence="12">
    <location>
        <begin position="93"/>
        <end position="95"/>
    </location>
</feature>
<feature type="helix" evidence="12">
    <location>
        <begin position="96"/>
        <end position="98"/>
    </location>
</feature>
<feature type="helix" evidence="12">
    <location>
        <begin position="99"/>
        <end position="102"/>
    </location>
</feature>
<sequence length="327" mass="35777">MSSSEDEDDKFLYGSDSELALPSSKRSRDDEADAGASSNPDIVKRQKFDSPVEETPATARDDRSDEDIYSDSSDDDSDSDLEVIISLGPDPTRLDAKLLDSYSTAATSSSKDVISVATDVSNTITKTSDERLITEGEANQGVTATTVKATESDGNVPKAMTGSIDLDKEGIFDSVGITTIDPEVLKEKPWRQPGANLSDYFNYGFNEFTWMEYLHRQEKLQQDYNPRRILMGLLSLQQQGKLNSANDTDSNLGNIIDNNNNVNNANMSNLNSNMGNSMSGTPNPPAPPMHPSFPPLPMFGSFPPFPMPGMMPPMNQQPNQNQNQNSK</sequence>
<dbReference type="EMBL" id="X83796">
    <property type="protein sequence ID" value="CAA58727.1"/>
    <property type="molecule type" value="Genomic_DNA"/>
</dbReference>
<dbReference type="EMBL" id="Z49593">
    <property type="protein sequence ID" value="CAA89621.1"/>
    <property type="molecule type" value="Genomic_DNA"/>
</dbReference>
<dbReference type="EMBL" id="BK006943">
    <property type="protein sequence ID" value="DAA08877.1"/>
    <property type="molecule type" value="Genomic_DNA"/>
</dbReference>
<dbReference type="PIR" id="A56545">
    <property type="entry name" value="A56545"/>
</dbReference>
<dbReference type="RefSeq" id="NP_012626.1">
    <property type="nucleotide sequence ID" value="NM_001181750.1"/>
</dbReference>
<dbReference type="PDB" id="3C66">
    <property type="method" value="X-ray"/>
    <property type="resolution" value="2.60 A"/>
    <property type="chains" value="C/D=80-105"/>
</dbReference>
<dbReference type="PDBsum" id="3C66"/>
<dbReference type="SMR" id="P45976"/>
<dbReference type="BioGRID" id="33847">
    <property type="interactions" value="483"/>
</dbReference>
<dbReference type="ComplexPortal" id="CPX-1053">
    <property type="entry name" value="Cleavage and polyadenylation specificity factor complex"/>
</dbReference>
<dbReference type="DIP" id="DIP-2029N"/>
<dbReference type="FunCoup" id="P45976">
    <property type="interactions" value="287"/>
</dbReference>
<dbReference type="IntAct" id="P45976">
    <property type="interactions" value="37"/>
</dbReference>
<dbReference type="MINT" id="P45976"/>
<dbReference type="STRING" id="4932.YJR093C"/>
<dbReference type="iPTMnet" id="P45976"/>
<dbReference type="PaxDb" id="4932-YJR093C"/>
<dbReference type="PeptideAtlas" id="P45976"/>
<dbReference type="EnsemblFungi" id="YJR093C_mRNA">
    <property type="protein sequence ID" value="YJR093C"/>
    <property type="gene ID" value="YJR093C"/>
</dbReference>
<dbReference type="GeneID" id="853555"/>
<dbReference type="KEGG" id="sce:YJR093C"/>
<dbReference type="AGR" id="SGD:S000003853"/>
<dbReference type="SGD" id="S000003853">
    <property type="gene designation" value="FIP1"/>
</dbReference>
<dbReference type="VEuPathDB" id="FungiDB:YJR093C"/>
<dbReference type="eggNOG" id="KOG1049">
    <property type="taxonomic scope" value="Eukaryota"/>
</dbReference>
<dbReference type="GeneTree" id="ENSGT00940000162578"/>
<dbReference type="HOGENOM" id="CLU_039307_2_1_1"/>
<dbReference type="InParanoid" id="P45976"/>
<dbReference type="OMA" id="GFNEYTW"/>
<dbReference type="OrthoDB" id="1917198at2759"/>
<dbReference type="BioCyc" id="YEAST:G3O-31720-MONOMER"/>
<dbReference type="BioGRID-ORCS" id="853555">
    <property type="hits" value="10 hits in 10 CRISPR screens"/>
</dbReference>
<dbReference type="PRO" id="PR:P45976"/>
<dbReference type="Proteomes" id="UP000002311">
    <property type="component" value="Chromosome X"/>
</dbReference>
<dbReference type="RNAct" id="P45976">
    <property type="molecule type" value="protein"/>
</dbReference>
<dbReference type="GO" id="GO:0005847">
    <property type="term" value="C:mRNA cleavage and polyadenylation specificity factor complex"/>
    <property type="evidence" value="ECO:0000314"/>
    <property type="project" value="SGD"/>
</dbReference>
<dbReference type="GO" id="GO:0005634">
    <property type="term" value="C:nucleus"/>
    <property type="evidence" value="ECO:0000303"/>
    <property type="project" value="ComplexPortal"/>
</dbReference>
<dbReference type="GO" id="GO:0030674">
    <property type="term" value="F:protein-macromolecule adaptor activity"/>
    <property type="evidence" value="ECO:0000315"/>
    <property type="project" value="SGD"/>
</dbReference>
<dbReference type="GO" id="GO:0006397">
    <property type="term" value="P:mRNA processing"/>
    <property type="evidence" value="ECO:0000314"/>
    <property type="project" value="SGD"/>
</dbReference>
<dbReference type="GO" id="GO:0030846">
    <property type="term" value="P:termination of RNA polymerase II transcription, poly(A)-coupled"/>
    <property type="evidence" value="ECO:0000303"/>
    <property type="project" value="ComplexPortal"/>
</dbReference>
<dbReference type="DisProt" id="DP00625"/>
<dbReference type="InterPro" id="IPR007854">
    <property type="entry name" value="Fip1_dom"/>
</dbReference>
<dbReference type="InterPro" id="IPR051187">
    <property type="entry name" value="Pre-mRNA_3'-end_processing_reg"/>
</dbReference>
<dbReference type="PANTHER" id="PTHR13484">
    <property type="entry name" value="FIP1-LIKE 1 PROTEIN"/>
    <property type="match status" value="1"/>
</dbReference>
<dbReference type="PANTHER" id="PTHR13484:SF0">
    <property type="entry name" value="PRE-MRNA 3'-END-PROCESSING FACTOR FIP1"/>
    <property type="match status" value="1"/>
</dbReference>
<dbReference type="Pfam" id="PF05182">
    <property type="entry name" value="Fip1"/>
    <property type="match status" value="1"/>
</dbReference>
<organism>
    <name type="scientific">Saccharomyces cerevisiae (strain ATCC 204508 / S288c)</name>
    <name type="common">Baker's yeast</name>
    <dbReference type="NCBI Taxonomy" id="559292"/>
    <lineage>
        <taxon>Eukaryota</taxon>
        <taxon>Fungi</taxon>
        <taxon>Dikarya</taxon>
        <taxon>Ascomycota</taxon>
        <taxon>Saccharomycotina</taxon>
        <taxon>Saccharomycetes</taxon>
        <taxon>Saccharomycetales</taxon>
        <taxon>Saccharomycetaceae</taxon>
        <taxon>Saccharomyces</taxon>
    </lineage>
</organism>
<gene>
    <name type="primary">FIP1</name>
    <name type="ordered locus">YJR093C</name>
    <name type="ORF">J1911</name>
</gene>
<name>FIP1_YEAST</name>
<accession>P45976</accession>
<accession>D6VWR1</accession>
<keyword id="KW-0002">3D-structure</keyword>
<keyword id="KW-0507">mRNA processing</keyword>
<keyword id="KW-0539">Nucleus</keyword>
<keyword id="KW-0597">Phosphoprotein</keyword>
<keyword id="KW-1185">Reference proteome</keyword>
<reference key="1">
    <citation type="journal article" date="1995" name="Cell">
        <title>The FIP1 gene encodes a component of a yeast pre-mRNA polyadenylation factor that directly interacts with poly(A) polymerase.</title>
        <authorList>
            <person name="Preker P.J."/>
            <person name="Lingner J."/>
            <person name="Minvielle-Sebastia L."/>
            <person name="Keller W."/>
        </authorList>
    </citation>
    <scope>NUCLEOTIDE SEQUENCE [GENOMIC DNA]</scope>
    <scope>INTERACTION WITH PAP1</scope>
</reference>
<reference key="2">
    <citation type="journal article" date="1996" name="EMBO J.">
        <title>Complete nucleotide sequence of Saccharomyces cerevisiae chromosome X.</title>
        <authorList>
            <person name="Galibert F."/>
            <person name="Alexandraki D."/>
            <person name="Baur A."/>
            <person name="Boles E."/>
            <person name="Chalwatzis N."/>
            <person name="Chuat J.-C."/>
            <person name="Coster F."/>
            <person name="Cziepluch C."/>
            <person name="de Haan M."/>
            <person name="Domdey H."/>
            <person name="Durand P."/>
            <person name="Entian K.-D."/>
            <person name="Gatius M."/>
            <person name="Goffeau A."/>
            <person name="Grivell L.A."/>
            <person name="Hennemann A."/>
            <person name="Herbert C.J."/>
            <person name="Heumann K."/>
            <person name="Hilger F."/>
            <person name="Hollenberg C.P."/>
            <person name="Huang M.-E."/>
            <person name="Jacq C."/>
            <person name="Jauniaux J.-C."/>
            <person name="Katsoulou C."/>
            <person name="Kirchrath L."/>
            <person name="Kleine K."/>
            <person name="Kordes E."/>
            <person name="Koetter P."/>
            <person name="Liebl S."/>
            <person name="Louis E.J."/>
            <person name="Manus V."/>
            <person name="Mewes H.-W."/>
            <person name="Miosga T."/>
            <person name="Obermaier B."/>
            <person name="Perea J."/>
            <person name="Pohl T.M."/>
            <person name="Portetelle D."/>
            <person name="Pujol A."/>
            <person name="Purnelle B."/>
            <person name="Ramezani Rad M."/>
            <person name="Rasmussen S.W."/>
            <person name="Rose M."/>
            <person name="Rossau R."/>
            <person name="Schaaff-Gerstenschlaeger I."/>
            <person name="Smits P.H.M."/>
            <person name="Scarcez T."/>
            <person name="Soriano N."/>
            <person name="To Van D."/>
            <person name="Tzermia M."/>
            <person name="Van Broekhoven A."/>
            <person name="Vandenbol M."/>
            <person name="Wedler H."/>
            <person name="von Wettstein D."/>
            <person name="Wambutt R."/>
            <person name="Zagulski M."/>
            <person name="Zollner A."/>
            <person name="Karpfinger-Hartl L."/>
        </authorList>
    </citation>
    <scope>NUCLEOTIDE SEQUENCE [LARGE SCALE GENOMIC DNA]</scope>
    <source>
        <strain>ATCC 204508 / S288c</strain>
    </source>
</reference>
<reference key="3">
    <citation type="journal article" date="2014" name="G3 (Bethesda)">
        <title>The reference genome sequence of Saccharomyces cerevisiae: Then and now.</title>
        <authorList>
            <person name="Engel S.R."/>
            <person name="Dietrich F.S."/>
            <person name="Fisk D.G."/>
            <person name="Binkley G."/>
            <person name="Balakrishnan R."/>
            <person name="Costanzo M.C."/>
            <person name="Dwight S.S."/>
            <person name="Hitz B.C."/>
            <person name="Karra K."/>
            <person name="Nash R.S."/>
            <person name="Weng S."/>
            <person name="Wong E.D."/>
            <person name="Lloyd P."/>
            <person name="Skrzypek M.S."/>
            <person name="Miyasato S.R."/>
            <person name="Simison M."/>
            <person name="Cherry J.M."/>
        </authorList>
    </citation>
    <scope>GENOME REANNOTATION</scope>
    <source>
        <strain>ATCC 204508 / S288c</strain>
    </source>
</reference>
<reference key="4">
    <citation type="journal article" date="2000" name="EMBO J.">
        <title>The WD-repeat protein pfs2p bridges two essential factors within the yeast pre-mRNA 3'-end-processing complex.</title>
        <authorList>
            <person name="Ohnacker M."/>
            <person name="Barabino S.M.L."/>
            <person name="Preker P.J."/>
            <person name="Keller W."/>
        </authorList>
    </citation>
    <scope>INTERACTION WITH PFS2; RNA14 AND YSH1</scope>
</reference>
<reference key="5">
    <citation type="journal article" date="2001" name="Mol. Cell. Biol.">
        <title>Fip1 regulates the activity of Poly(A) polymerase through multiple interactions.</title>
        <authorList>
            <person name="Helmling S."/>
            <person name="Zhelkovsky A."/>
            <person name="Moore C.L."/>
        </authorList>
    </citation>
    <scope>FUNCTION</scope>
    <scope>INTERACTION WITH PAP1 AND YTH1</scope>
</reference>
<reference key="6">
    <citation type="journal article" date="2003" name="J. Biol. Chem.">
        <title>Organization and function of APT, a subcomplex of the yeast cleavage and polyadenylation factor involved in the formation of mRNA and small nucleolar RNA 3'-ends.</title>
        <authorList>
            <person name="Nedea E."/>
            <person name="He X."/>
            <person name="Kim M."/>
            <person name="Pootoolal J."/>
            <person name="Zhong G."/>
            <person name="Canadien V."/>
            <person name="Hughes T."/>
            <person name="Buratowski S."/>
            <person name="Moore C.L."/>
            <person name="Greenblatt J."/>
        </authorList>
    </citation>
    <scope>IDENTIFICATION IN THE CPF COMPLEX</scope>
    <scope>SUBCELLULAR LOCATION</scope>
    <scope>IDENTIFICATION BY MASS SPECTROMETRY</scope>
</reference>
<reference key="7">
    <citation type="journal article" date="2003" name="Nature">
        <title>Global analysis of protein expression in yeast.</title>
        <authorList>
            <person name="Ghaemmaghami S."/>
            <person name="Huh W.-K."/>
            <person name="Bower K."/>
            <person name="Howson R.W."/>
            <person name="Belle A."/>
            <person name="Dephoure N."/>
            <person name="O'Shea E.K."/>
            <person name="Weissman J.S."/>
        </authorList>
    </citation>
    <scope>LEVEL OF PROTEIN EXPRESSION [LARGE SCALE ANALYSIS]</scope>
</reference>
<reference key="8">
    <citation type="journal article" date="2003" name="Nucleic Acids Res.">
        <title>Functional dissection of the zinc finger and flanking domains of the Yth1 cleavage/polyadenylation factor.</title>
        <authorList>
            <person name="Tacahashi Y."/>
            <person name="Helmling S."/>
            <person name="Moore C.L."/>
        </authorList>
    </citation>
    <scope>INTERACTION WITH YTH1</scope>
</reference>
<reference key="9">
    <citation type="journal article" date="2008" name="Mol. Cell. Proteomics">
        <title>A multidimensional chromatography technology for in-depth phosphoproteome analysis.</title>
        <authorList>
            <person name="Albuquerque C.P."/>
            <person name="Smolka M.B."/>
            <person name="Payne S.H."/>
            <person name="Bafna V."/>
            <person name="Eng J."/>
            <person name="Zhou H."/>
        </authorList>
    </citation>
    <scope>PHOSPHORYLATION [LARGE SCALE ANALYSIS] AT SER-50</scope>
    <scope>IDENTIFICATION BY MASS SPECTROMETRY [LARGE SCALE ANALYSIS]</scope>
</reference>
<reference key="10">
    <citation type="journal article" date="2009" name="Science">
        <title>Global analysis of Cdk1 substrate phosphorylation sites provides insights into evolution.</title>
        <authorList>
            <person name="Holt L.J."/>
            <person name="Tuch B.B."/>
            <person name="Villen J."/>
            <person name="Johnson A.D."/>
            <person name="Gygi S.P."/>
            <person name="Morgan D.O."/>
        </authorList>
    </citation>
    <scope>PHOSPHORYLATION [LARGE SCALE ANALYSIS] AT SER-50</scope>
    <scope>IDENTIFICATION BY MASS SPECTROMETRY [LARGE SCALE ANALYSIS]</scope>
</reference>
<reference key="11">
    <citation type="journal article" date="2008" name="Biochemistry">
        <title>Structure of yeast poly(A) polymerase in complex with a peptide from Fip1, an intrinsically disordered protein.</title>
        <authorList>
            <person name="Meinke G."/>
            <person name="Ezeokonkwo C."/>
            <person name="Balbo P."/>
            <person name="Stafford W."/>
            <person name="Moore C."/>
            <person name="Bohm A."/>
        </authorList>
    </citation>
    <scope>X-RAY CRYSTALLOGRAPHY (2.6 ANGSTROMS) OF 80-105 IN COMPLEX WITH PAP1</scope>
    <scope>SUBUNIT</scope>
    <scope>DOMAIN</scope>
    <scope>CIRCULAR DICHROISM</scope>
</reference>
<evidence type="ECO:0000256" key="1">
    <source>
        <dbReference type="SAM" id="MobiDB-lite"/>
    </source>
</evidence>
<evidence type="ECO:0000269" key="2">
    <source>
    </source>
</evidence>
<evidence type="ECO:0000269" key="3">
    <source>
    </source>
</evidence>
<evidence type="ECO:0000269" key="4">
    <source>
    </source>
</evidence>
<evidence type="ECO:0000269" key="5">
    <source>
    </source>
</evidence>
<evidence type="ECO:0000269" key="6">
    <source>
    </source>
</evidence>
<evidence type="ECO:0000269" key="7">
    <source>
    </source>
</evidence>
<evidence type="ECO:0000269" key="8">
    <source>
    </source>
</evidence>
<evidence type="ECO:0000305" key="9"/>
<evidence type="ECO:0007744" key="10">
    <source>
    </source>
</evidence>
<evidence type="ECO:0007744" key="11">
    <source>
    </source>
</evidence>
<evidence type="ECO:0007829" key="12">
    <source>
        <dbReference type="PDB" id="3C66"/>
    </source>
</evidence>
<protein>
    <recommendedName>
        <fullName>Pre-mRNA polyadenylation factor FIP1</fullName>
    </recommendedName>
</protein>
<proteinExistence type="evidence at protein level"/>
<comment type="function">
    <text evidence="3">Polymerase-regulating component of the cleavage and polyadenylation factor (CPF) complex, which plays a key role in polyadenylation-dependent pre-mRNA 3'-end formation and cooperates with cleavage factors including the CFIA complex and NAB4/CFIB. Pre-mRNA polyadenylation factor that directly interacts with poly(A) polymerase PAP1. This inhibits the extension of an oligo(A) primer by limiting access of the RNA substrate to the C-terminal RNA binding domain of PAP1. Seems to tether PAP1 to the cleavage factor I.</text>
</comment>
<comment type="subunit">
    <text evidence="2 3 4 5 7 8">Component of the cleavage and polyadenylation factor (CPF) complex, which is composed of PTI1, SYC1, SSU72, GLC7, MPE1, REF2, PFS2, PTA1, YSH1/BRR5, SWD2, CFT2/YDH1, YTH1, CFT1/YHH1, FIP1 and PAP1. In the CPF complex probably interacts directly with PAP1 and YTH1. Interacts with RNA14.</text>
</comment>
<comment type="interaction">
    <interactant intactId="EBI-6940">
        <id>P45976</id>
    </interactant>
    <interactant intactId="EBI-12917">
        <id>P29468</id>
        <label>PAP1</label>
    </interactant>
    <organismsDiffer>false</organismsDiffer>
    <experiments>10</experiments>
</comment>
<comment type="interaction">
    <interactant intactId="EBI-6940">
        <id>P45976</id>
    </interactant>
    <interactant intactId="EBI-14145">
        <id>Q01329</id>
        <label>PTA1</label>
    </interactant>
    <organismsDiffer>false</organismsDiffer>
    <experiments>6</experiments>
</comment>
<comment type="interaction">
    <interactant intactId="EBI-6940">
        <id>P45976</id>
    </interactant>
    <interactant intactId="EBI-38049">
        <id>Q06102</id>
        <label>YTH1</label>
    </interactant>
    <organismsDiffer>false</organismsDiffer>
    <experiments>6</experiments>
</comment>
<comment type="subcellular location">
    <subcellularLocation>
        <location evidence="5">Nucleus</location>
    </subcellularLocation>
</comment>
<comment type="domain">
    <text evidence="7">Circular dichroism measurements suggest that the protein is largely unstructured in the absence of interaction with PAP1.</text>
</comment>
<comment type="miscellaneous">
    <text evidence="6">Present with 1310 molecules/cell in log phase SD medium.</text>
</comment>
<comment type="similarity">
    <text evidence="9">Belongs to the FIP1 family.</text>
</comment>